<feature type="chain" id="PRO_1000086258" description="Small ribosomal subunit protein uS13">
    <location>
        <begin position="1"/>
        <end position="118"/>
    </location>
</feature>
<feature type="region of interest" description="Disordered" evidence="2">
    <location>
        <begin position="94"/>
        <end position="118"/>
    </location>
</feature>
<keyword id="KW-0687">Ribonucleoprotein</keyword>
<keyword id="KW-0689">Ribosomal protein</keyword>
<keyword id="KW-0694">RNA-binding</keyword>
<keyword id="KW-0699">rRNA-binding</keyword>
<keyword id="KW-0820">tRNA-binding</keyword>
<name>RS13_SHEB9</name>
<sequence>MARIAGINIPDQKHTVIALTAIFGIGRTRARAICAATAIAETAKIKELSEAQIDILREEVAKYIVEGDLRREISMNIKRLMDLGCYRGLRHRRSLPLRGQRTKTNARTRKGPRKPIRK</sequence>
<dbReference type="EMBL" id="CP000891">
    <property type="protein sequence ID" value="ABX47403.1"/>
    <property type="molecule type" value="Genomic_DNA"/>
</dbReference>
<dbReference type="RefSeq" id="WP_006083578.1">
    <property type="nucleotide sequence ID" value="NC_009997.1"/>
</dbReference>
<dbReference type="SMR" id="A9KWC3"/>
<dbReference type="GeneID" id="11770577"/>
<dbReference type="KEGG" id="sbn:Sbal195_0221"/>
<dbReference type="HOGENOM" id="CLU_103849_1_2_6"/>
<dbReference type="Proteomes" id="UP000000770">
    <property type="component" value="Chromosome"/>
</dbReference>
<dbReference type="GO" id="GO:0005829">
    <property type="term" value="C:cytosol"/>
    <property type="evidence" value="ECO:0007669"/>
    <property type="project" value="TreeGrafter"/>
</dbReference>
<dbReference type="GO" id="GO:0015935">
    <property type="term" value="C:small ribosomal subunit"/>
    <property type="evidence" value="ECO:0007669"/>
    <property type="project" value="TreeGrafter"/>
</dbReference>
<dbReference type="GO" id="GO:0019843">
    <property type="term" value="F:rRNA binding"/>
    <property type="evidence" value="ECO:0007669"/>
    <property type="project" value="UniProtKB-UniRule"/>
</dbReference>
<dbReference type="GO" id="GO:0003735">
    <property type="term" value="F:structural constituent of ribosome"/>
    <property type="evidence" value="ECO:0007669"/>
    <property type="project" value="InterPro"/>
</dbReference>
<dbReference type="GO" id="GO:0000049">
    <property type="term" value="F:tRNA binding"/>
    <property type="evidence" value="ECO:0007669"/>
    <property type="project" value="UniProtKB-UniRule"/>
</dbReference>
<dbReference type="GO" id="GO:0006412">
    <property type="term" value="P:translation"/>
    <property type="evidence" value="ECO:0007669"/>
    <property type="project" value="UniProtKB-UniRule"/>
</dbReference>
<dbReference type="FunFam" id="1.10.8.50:FF:000001">
    <property type="entry name" value="30S ribosomal protein S13"/>
    <property type="match status" value="1"/>
</dbReference>
<dbReference type="FunFam" id="4.10.910.10:FF:000001">
    <property type="entry name" value="30S ribosomal protein S13"/>
    <property type="match status" value="1"/>
</dbReference>
<dbReference type="Gene3D" id="1.10.8.50">
    <property type="match status" value="1"/>
</dbReference>
<dbReference type="Gene3D" id="4.10.910.10">
    <property type="entry name" value="30s ribosomal protein s13, domain 2"/>
    <property type="match status" value="1"/>
</dbReference>
<dbReference type="HAMAP" id="MF_01315">
    <property type="entry name" value="Ribosomal_uS13"/>
    <property type="match status" value="1"/>
</dbReference>
<dbReference type="InterPro" id="IPR027437">
    <property type="entry name" value="Rbsml_uS13_C"/>
</dbReference>
<dbReference type="InterPro" id="IPR001892">
    <property type="entry name" value="Ribosomal_uS13"/>
</dbReference>
<dbReference type="InterPro" id="IPR010979">
    <property type="entry name" value="Ribosomal_uS13-like_H2TH"/>
</dbReference>
<dbReference type="InterPro" id="IPR019980">
    <property type="entry name" value="Ribosomal_uS13_bac-type"/>
</dbReference>
<dbReference type="InterPro" id="IPR018269">
    <property type="entry name" value="Ribosomal_uS13_CS"/>
</dbReference>
<dbReference type="NCBIfam" id="TIGR03631">
    <property type="entry name" value="uS13_bact"/>
    <property type="match status" value="1"/>
</dbReference>
<dbReference type="PANTHER" id="PTHR10871">
    <property type="entry name" value="30S RIBOSOMAL PROTEIN S13/40S RIBOSOMAL PROTEIN S18"/>
    <property type="match status" value="1"/>
</dbReference>
<dbReference type="PANTHER" id="PTHR10871:SF1">
    <property type="entry name" value="SMALL RIBOSOMAL SUBUNIT PROTEIN US13M"/>
    <property type="match status" value="1"/>
</dbReference>
<dbReference type="Pfam" id="PF00416">
    <property type="entry name" value="Ribosomal_S13"/>
    <property type="match status" value="1"/>
</dbReference>
<dbReference type="PIRSF" id="PIRSF002134">
    <property type="entry name" value="Ribosomal_S13"/>
    <property type="match status" value="1"/>
</dbReference>
<dbReference type="SUPFAM" id="SSF46946">
    <property type="entry name" value="S13-like H2TH domain"/>
    <property type="match status" value="1"/>
</dbReference>
<dbReference type="PROSITE" id="PS00646">
    <property type="entry name" value="RIBOSOMAL_S13_1"/>
    <property type="match status" value="1"/>
</dbReference>
<dbReference type="PROSITE" id="PS50159">
    <property type="entry name" value="RIBOSOMAL_S13_2"/>
    <property type="match status" value="1"/>
</dbReference>
<reference key="1">
    <citation type="submission" date="2007-11" db="EMBL/GenBank/DDBJ databases">
        <title>Complete sequence of chromosome of Shewanella baltica OS195.</title>
        <authorList>
            <consortium name="US DOE Joint Genome Institute"/>
            <person name="Copeland A."/>
            <person name="Lucas S."/>
            <person name="Lapidus A."/>
            <person name="Barry K."/>
            <person name="Glavina del Rio T."/>
            <person name="Dalin E."/>
            <person name="Tice H."/>
            <person name="Pitluck S."/>
            <person name="Chain P."/>
            <person name="Malfatti S."/>
            <person name="Shin M."/>
            <person name="Vergez L."/>
            <person name="Schmutz J."/>
            <person name="Larimer F."/>
            <person name="Land M."/>
            <person name="Hauser L."/>
            <person name="Kyrpides N."/>
            <person name="Kim E."/>
            <person name="Brettar I."/>
            <person name="Rodrigues J."/>
            <person name="Konstantinidis K."/>
            <person name="Klappenbach J."/>
            <person name="Hofle M."/>
            <person name="Tiedje J."/>
            <person name="Richardson P."/>
        </authorList>
    </citation>
    <scope>NUCLEOTIDE SEQUENCE [LARGE SCALE GENOMIC DNA]</scope>
    <source>
        <strain>OS195</strain>
    </source>
</reference>
<organism>
    <name type="scientific">Shewanella baltica (strain OS195)</name>
    <dbReference type="NCBI Taxonomy" id="399599"/>
    <lineage>
        <taxon>Bacteria</taxon>
        <taxon>Pseudomonadati</taxon>
        <taxon>Pseudomonadota</taxon>
        <taxon>Gammaproteobacteria</taxon>
        <taxon>Alteromonadales</taxon>
        <taxon>Shewanellaceae</taxon>
        <taxon>Shewanella</taxon>
    </lineage>
</organism>
<proteinExistence type="inferred from homology"/>
<gene>
    <name evidence="1" type="primary">rpsM</name>
    <name type="ordered locus">Sbal195_0221</name>
</gene>
<protein>
    <recommendedName>
        <fullName evidence="1">Small ribosomal subunit protein uS13</fullName>
    </recommendedName>
    <alternativeName>
        <fullName evidence="3">30S ribosomal protein S13</fullName>
    </alternativeName>
</protein>
<accession>A9KWC3</accession>
<comment type="function">
    <text evidence="1">Located at the top of the head of the 30S subunit, it contacts several helices of the 16S rRNA. In the 70S ribosome it contacts the 23S rRNA (bridge B1a) and protein L5 of the 50S subunit (bridge B1b), connecting the 2 subunits; these bridges are implicated in subunit movement. Contacts the tRNAs in the A and P-sites.</text>
</comment>
<comment type="subunit">
    <text evidence="1">Part of the 30S ribosomal subunit. Forms a loose heterodimer with protein S19. Forms two bridges to the 50S subunit in the 70S ribosome.</text>
</comment>
<comment type="similarity">
    <text evidence="1">Belongs to the universal ribosomal protein uS13 family.</text>
</comment>
<evidence type="ECO:0000255" key="1">
    <source>
        <dbReference type="HAMAP-Rule" id="MF_01315"/>
    </source>
</evidence>
<evidence type="ECO:0000256" key="2">
    <source>
        <dbReference type="SAM" id="MobiDB-lite"/>
    </source>
</evidence>
<evidence type="ECO:0000305" key="3"/>